<feature type="initiator methionine" description="Removed; by host" evidence="3">
    <location>
        <position position="1"/>
    </location>
</feature>
<feature type="chain" id="PRO_0000319084" description="Large envelope protein" evidence="3">
    <location>
        <begin position="2"/>
        <end position="400"/>
    </location>
</feature>
<feature type="topological domain" description="Intravirion; in internal conformation" evidence="3">
    <location>
        <begin position="2"/>
        <end position="253"/>
    </location>
</feature>
<feature type="topological domain" description="Virion surface; in external conformation" evidence="3">
    <location>
        <begin position="2"/>
        <end position="181"/>
    </location>
</feature>
<feature type="transmembrane region" description="Helical; Name=TM1; Note=In external conformation" evidence="3">
    <location>
        <begin position="182"/>
        <end position="202"/>
    </location>
</feature>
<feature type="topological domain" description="Intravirion; in external conformation" evidence="3">
    <location>
        <begin position="203"/>
        <end position="253"/>
    </location>
</feature>
<feature type="transmembrane region" description="Helical; Name=TM2" evidence="3">
    <location>
        <begin position="254"/>
        <end position="274"/>
    </location>
</feature>
<feature type="topological domain" description="Virion surface" evidence="3">
    <location>
        <begin position="275"/>
        <end position="348"/>
    </location>
</feature>
<feature type="transmembrane region" description="Helical" evidence="3">
    <location>
        <begin position="349"/>
        <end position="369"/>
    </location>
</feature>
<feature type="topological domain" description="Intravirion" evidence="3">
    <location>
        <begin position="370"/>
        <end position="375"/>
    </location>
</feature>
<feature type="transmembrane region" description="Helical; Name=TM3" evidence="3">
    <location>
        <begin position="376"/>
        <end position="398"/>
    </location>
</feature>
<feature type="topological domain" description="Virion surface" evidence="3">
    <location>
        <begin position="399"/>
        <end position="400"/>
    </location>
</feature>
<feature type="region of interest" description="Pre-S" evidence="3">
    <location>
        <begin position="2"/>
        <end position="174"/>
    </location>
</feature>
<feature type="region of interest" description="Pre-S1" evidence="3">
    <location>
        <begin position="2"/>
        <end position="119"/>
    </location>
</feature>
<feature type="region of interest" description="Disordered" evidence="4">
    <location>
        <begin position="89"/>
        <end position="117"/>
    </location>
</feature>
<feature type="region of interest" description="Pre-S2" evidence="3">
    <location>
        <begin position="120"/>
        <end position="174"/>
    </location>
</feature>
<feature type="compositionally biased region" description="Polar residues" evidence="4">
    <location>
        <begin position="96"/>
        <end position="106"/>
    </location>
</feature>
<feature type="lipid moiety-binding region" description="N-myristoyl glycine; by host" evidence="3">
    <location>
        <position position="2"/>
    </location>
</feature>
<feature type="glycosylation site" description="N-linked (GlcNAc...) asparagine; by host" evidence="3">
    <location>
        <position position="320"/>
    </location>
</feature>
<feature type="splice variant" id="VSP_031398" description="In isoform S." evidence="5">
    <location>
        <begin position="1"/>
        <end position="174"/>
    </location>
</feature>
<feature type="splice variant" id="VSP_031399" description="In isoform M." evidence="5">
    <location>
        <begin position="1"/>
        <end position="119"/>
    </location>
</feature>
<feature type="modified residue" description="N-acetylmethionine" evidence="5">
    <location sequence="Q998L9-2">
        <position position="1"/>
    </location>
</feature>
<feature type="glycosylation site" description="N-linked (GlcNAc...) asparagine" evidence="5">
    <location sequence="Q998L9-2">
        <position position="4"/>
    </location>
</feature>
<evidence type="ECO:0000250" key="1">
    <source>
        <dbReference type="UniProtKB" id="P03138"/>
    </source>
</evidence>
<evidence type="ECO:0000250" key="2">
    <source>
        <dbReference type="UniProtKB" id="P03141"/>
    </source>
</evidence>
<evidence type="ECO:0000255" key="3">
    <source>
        <dbReference type="HAMAP-Rule" id="MF_04075"/>
    </source>
</evidence>
<evidence type="ECO:0000256" key="4">
    <source>
        <dbReference type="SAM" id="MobiDB-lite"/>
    </source>
</evidence>
<evidence type="ECO:0000305" key="5"/>
<dbReference type="EMBL" id="AB048704">
    <property type="protein sequence ID" value="BAB39145.1"/>
    <property type="status" value="ALT_INIT"/>
    <property type="molecule type" value="Genomic_DNA"/>
</dbReference>
<dbReference type="PIR" id="JQ2102">
    <property type="entry name" value="JQ2102"/>
</dbReference>
<dbReference type="SMR" id="Q998L9"/>
<dbReference type="GlyCosmos" id="Q998L9">
    <property type="glycosylation" value="2 sites, No reported glycans"/>
</dbReference>
<dbReference type="Proteomes" id="UP000007927">
    <property type="component" value="Genome"/>
</dbReference>
<dbReference type="GO" id="GO:0016020">
    <property type="term" value="C:membrane"/>
    <property type="evidence" value="ECO:0007669"/>
    <property type="project" value="UniProtKB-UniRule"/>
</dbReference>
<dbReference type="GO" id="GO:0019031">
    <property type="term" value="C:viral envelope"/>
    <property type="evidence" value="ECO:0007669"/>
    <property type="project" value="UniProtKB-KW"/>
</dbReference>
<dbReference type="GO" id="GO:0055036">
    <property type="term" value="C:virion membrane"/>
    <property type="evidence" value="ECO:0007669"/>
    <property type="project" value="UniProtKB-SubCell"/>
</dbReference>
<dbReference type="GO" id="GO:0075513">
    <property type="term" value="P:caveolin-mediated endocytosis of virus by host cell"/>
    <property type="evidence" value="ECO:0007669"/>
    <property type="project" value="UniProtKB-KW"/>
</dbReference>
<dbReference type="GO" id="GO:0039654">
    <property type="term" value="P:fusion of virus membrane with host endosome membrane"/>
    <property type="evidence" value="ECO:0007669"/>
    <property type="project" value="UniProtKB-KW"/>
</dbReference>
<dbReference type="GO" id="GO:0019062">
    <property type="term" value="P:virion attachment to host cell"/>
    <property type="evidence" value="ECO:0007669"/>
    <property type="project" value="UniProtKB-UniRule"/>
</dbReference>
<dbReference type="HAMAP" id="MF_04075">
    <property type="entry name" value="HBV_HBSAG"/>
    <property type="match status" value="1"/>
</dbReference>
<dbReference type="InterPro" id="IPR000349">
    <property type="entry name" value="HBV_HBSAG"/>
</dbReference>
<dbReference type="Pfam" id="PF00695">
    <property type="entry name" value="vMSA"/>
    <property type="match status" value="1"/>
</dbReference>
<accession>Q998L9</accession>
<comment type="function">
    <text evidence="3">The large envelope protein exists in two topological conformations, one which is termed 'external' or Le-HBsAg and the other 'internal' or Li-HBsAg. In its external conformation the protein attaches the virus to cell receptors and thereby initiating infection. This interaction determines the species specificity and liver tropism. This attachment induces virion internalization predominantly through caveolin-mediated endocytosis. The large envelope protein also assures fusion between virion membrane and endosomal membrane. In its internal conformation the protein plays a role in virion morphogenesis and mediates the contact with the nucleocapsid like a matrix protein.</text>
</comment>
<comment type="function">
    <text evidence="3">The middle envelope protein plays an important role in the budding of the virion. It is involved in the induction of budding in a nucleocapsid independent way. In this process the majority of envelope proteins bud to form subviral lipoprotein particles of 22 nm of diameter that do not contain a nucleocapsid.</text>
</comment>
<comment type="subunit">
    <molecule>Isoform L</molecule>
    <text evidence="2">In its internal form (Li-HBsAg), interacts with the capsid protein and with the isoform S. Interacts with host chaperone CANX.</text>
</comment>
<comment type="subunit">
    <molecule>Isoform M</molecule>
    <text evidence="2">Associates with host chaperone CANX through its pre-S2 N glycan; this association may be essential for isoform M proper secretion.</text>
</comment>
<comment type="subunit">
    <molecule>Isoform S</molecule>
    <text evidence="2">Interacts with isoform L. Interacts with the antigens of satellite virus HDV (HDVAgs); this interaction is required for encapsidation of HDV genomic RNA.</text>
</comment>
<comment type="subcellular location">
    <subcellularLocation>
        <location evidence="3">Virion membrane</location>
    </subcellularLocation>
</comment>
<comment type="alternative products">
    <event type="alternative splicing"/>
    <event type="alternative initiation"/>
    <isoform>
        <id>Q998L9-1</id>
        <name>L</name>
        <name>Large envelope protein</name>
        <name>LHB</name>
        <name>L-HBsAg</name>
        <sequence type="displayed"/>
    </isoform>
    <isoform>
        <id>Q998L9-2</id>
        <name>M</name>
        <name>Middle envelope protein</name>
        <name>MHB</name>
        <name>M-HBsAg</name>
        <sequence type="described" ref="VSP_031399"/>
    </isoform>
    <isoform>
        <id>Q998L9-3</id>
        <name>S</name>
        <name>Small envelope protein</name>
        <name>SHB</name>
        <name>S-HBsAg</name>
        <sequence type="described" ref="VSP_031398"/>
    </isoform>
</comment>
<comment type="domain">
    <text evidence="3">The large envelope protein is synthesized with the pre-S region at the cytosolic side of the endoplasmic reticulum and, hence will be within the virion after budding. Therefore the pre-S region is not N-glycosylated. Later a post-translational translocation of N-terminal pre-S and TM1 domains occur in about 50% of proteins at the virion surface. These molecules change their topology by an unknown mechanism, resulting in exposure of pre-S region at virion surface. For isoform M in contrast, the pre-S2 region is translocated cotranslationally to the endoplasmic reticulum lumen and is N-glycosylated.</text>
</comment>
<comment type="PTM">
    <text evidence="1 3">Isoform M is N-terminally acetylated by host at a ratio of 90%, and N-glycosylated by host at the pre-S2 region.</text>
</comment>
<comment type="PTM">
    <text evidence="3">Myristoylated.</text>
</comment>
<comment type="biotechnology">
    <text>Systematic vaccination of individuals at risk of exposure to the virus has been the main method of controlling the morbidity and mortality associated with hepatitis B. The first hepatitis B vaccine was manufactured by the purification and inactivation of HBsAg obtained from the plasma of chronic hepatitis B virus carriers. The vaccine is now produced by recombinant DNA techniques and expression of the S isoform in yeast cells. The pre-S region do not seem to induce strong enough antigenic response.</text>
</comment>
<comment type="similarity">
    <text evidence="3">Belongs to the orthohepadnavirus major surface antigen family.</text>
</comment>
<comment type="sequence caution" evidence="5">
    <conflict type="erroneous initiation">
        <sequence resource="EMBL-CDS" id="BAB39145"/>
    </conflict>
</comment>
<protein>
    <recommendedName>
        <fullName evidence="3">Large envelope protein</fullName>
    </recommendedName>
    <alternativeName>
        <fullName evidence="3">L glycoprotein</fullName>
    </alternativeName>
    <alternativeName>
        <fullName evidence="3">L-HBsAg</fullName>
        <shortName evidence="3">LHB</shortName>
    </alternativeName>
    <alternativeName>
        <fullName evidence="3">Large S protein</fullName>
    </alternativeName>
    <alternativeName>
        <fullName evidence="3">Large surface protein</fullName>
    </alternativeName>
    <alternativeName>
        <fullName evidence="3">Major surface antigen</fullName>
    </alternativeName>
</protein>
<name>HBSAG_HBVC9</name>
<proteinExistence type="evidence at protein level"/>
<organismHost>
    <name type="scientific">Homo sapiens</name>
    <name type="common">Human</name>
    <dbReference type="NCBI Taxonomy" id="9606"/>
</organismHost>
<organismHost>
    <name type="scientific">Pan troglodytes</name>
    <name type="common">Chimpanzee</name>
    <dbReference type="NCBI Taxonomy" id="9598"/>
</organismHost>
<reference key="1">
    <citation type="journal article" date="2001" name="J. Gen. Virol.">
        <title>A novel variant genotype C of hepatitis B virus identified in isolates from Australian Aborigines: complete genome sequence and phylogenetic relatedness.</title>
        <authorList>
            <person name="Sugauchi F."/>
            <person name="Mizokami M."/>
            <person name="Orito E."/>
            <person name="Ohno T."/>
            <person name="Kato H."/>
            <person name="Suzuki S."/>
            <person name="Kimura Y."/>
            <person name="Ueda R."/>
            <person name="Butterworth L.A."/>
            <person name="Cooksley W.G."/>
        </authorList>
    </citation>
    <scope>NUCLEOTIDE SEQUENCE [GENOMIC DNA]</scope>
</reference>
<reference key="2">
    <citation type="journal article" date="1996" name="Intervirology">
        <title>Functions of the large hepatitis B virus surface protein in viral particle morphogenesis.</title>
        <authorList>
            <person name="Bruss V."/>
            <person name="Gerhardt E."/>
            <person name="Vieluf K."/>
            <person name="Wunderlich G."/>
        </authorList>
    </citation>
    <scope>REVIEW</scope>
</reference>
<reference key="3">
    <citation type="journal article" date="1998" name="Adv. Exp. Med. Biol.">
        <title>Role of glycan processing in hepatitis B virus envelope protein trafficking.</title>
        <authorList>
            <person name="Block T.M."/>
            <person name="Lu X."/>
            <person name="Mehta A."/>
            <person name="Park J."/>
            <person name="Blumberg B.S."/>
            <person name="Dwek R."/>
        </authorList>
    </citation>
    <scope>REVIEW</scope>
</reference>
<reference key="4">
    <citation type="journal article" date="2004" name="Virus Res.">
        <title>Envelopment of the hepatitis B virus nucleocapsid.</title>
        <authorList>
            <person name="Bruss V."/>
        </authorList>
    </citation>
    <scope>REVIEW</scope>
</reference>
<reference key="5">
    <citation type="journal article" date="2006" name="Cancer Sci.">
        <title>Hepatitis B virus pre-S mutants, endoplasmic reticulum stress and hepatocarcinogenesis.</title>
        <authorList>
            <person name="Wang H.C."/>
            <person name="Huang W."/>
            <person name="Lai M.D."/>
            <person name="Su I.J."/>
        </authorList>
    </citation>
    <scope>REVIEW</scope>
</reference>
<gene>
    <name evidence="3" type="primary">S</name>
</gene>
<sequence length="400" mass="43698">MGGWSSKHRKGMGTNLSVPNPLGFFPDHQLDPAFGANSNNPDWDFNPNKDHWPEANQVGAGAFGPGFTPPHGGFLGWSPQAQGILTTVPAAPPPASTNRQSGRQPTPISPPLRDTHPQAMQWNSTAFHQALQDPRVRGLYFPAGGSSSGTVNPVPNTVSHISSIFTKTGDPASNMESTTSGFLGPLLVLQAGFFLLTRILTIPQSLDSWWTSLNFLGGAPGCIGQNSQSQTSNHSPTSCPPTCPGYRWMCLRRFIIFLFILLLCLIFLLVLLDYQGMLPVCPLLPGSTTTSTGPCRTCTITAQGTSMFPSCCCTKPSDGNCTCIPIPSSWGFAKFLWEWASVRFSWLSLLVPFVQWFAGLSPTVWLSVIWMIWYWGPSLYNILSPFLPLLPIFLCLWVYI</sequence>
<organism>
    <name type="scientific">Hepatitis B virus genotype C subtype ayw (isolate Australia/AustRC/1992)</name>
    <name type="common">HBV-C</name>
    <dbReference type="NCBI Taxonomy" id="489471"/>
    <lineage>
        <taxon>Viruses</taxon>
        <taxon>Riboviria</taxon>
        <taxon>Pararnavirae</taxon>
        <taxon>Artverviricota</taxon>
        <taxon>Revtraviricetes</taxon>
        <taxon>Blubervirales</taxon>
        <taxon>Hepadnaviridae</taxon>
        <taxon>Orthohepadnavirus</taxon>
        <taxon>Hepatitis B virus</taxon>
        <taxon>hepatitis B virus genotype C</taxon>
    </lineage>
</organism>
<keyword id="KW-0007">Acetylation</keyword>
<keyword id="KW-0024">Alternative initiation</keyword>
<keyword id="KW-0025">Alternative splicing</keyword>
<keyword id="KW-1166">Caveolin-mediated endocytosis of virus by host</keyword>
<keyword id="KW-1170">Fusion of virus membrane with host endosomal membrane</keyword>
<keyword id="KW-1168">Fusion of virus membrane with host membrane</keyword>
<keyword id="KW-0325">Glycoprotein</keyword>
<keyword id="KW-0945">Host-virus interaction</keyword>
<keyword id="KW-0449">Lipoprotein</keyword>
<keyword id="KW-0472">Membrane</keyword>
<keyword id="KW-0519">Myristate</keyword>
<keyword id="KW-0812">Transmembrane</keyword>
<keyword id="KW-1133">Transmembrane helix</keyword>
<keyword id="KW-1161">Viral attachment to host cell</keyword>
<keyword id="KW-0261">Viral envelope protein</keyword>
<keyword id="KW-1162">Viral penetration into host cytoplasm</keyword>
<keyword id="KW-0946">Virion</keyword>
<keyword id="KW-1164">Virus endocytosis by host</keyword>
<keyword id="KW-1160">Virus entry into host cell</keyword>